<accession>B8PZP3</accession>
<organism>
    <name type="scientific">Measles virus (strain Edmonston-Schwarz vaccine)</name>
    <name type="common">MeV</name>
    <name type="synonym">Subacute sclerose panencephalitis virus</name>
    <dbReference type="NCBI Taxonomy" id="132487"/>
    <lineage>
        <taxon>Viruses</taxon>
        <taxon>Riboviria</taxon>
        <taxon>Orthornavirae</taxon>
        <taxon>Negarnaviricota</taxon>
        <taxon>Haploviricotina</taxon>
        <taxon>Monjiviricetes</taxon>
        <taxon>Mononegavirales</taxon>
        <taxon>Paramyxoviridae</taxon>
        <taxon>Orthoparamyxovirinae</taxon>
        <taxon>Morbillivirus</taxon>
        <taxon>Morbillivirus hominis</taxon>
        <taxon>Measles morbillivirus</taxon>
    </lineage>
</organism>
<name>NCAP_MEASW</name>
<keyword id="KW-0167">Capsid protein</keyword>
<keyword id="KW-1139">Helical capsid protein</keyword>
<keyword id="KW-1035">Host cytoplasm</keyword>
<keyword id="KW-1048">Host nucleus</keyword>
<keyword id="KW-0945">Host-virus interaction</keyword>
<keyword id="KW-0597">Phosphoprotein</keyword>
<keyword id="KW-0687">Ribonucleoprotein</keyword>
<keyword id="KW-0694">RNA-binding</keyword>
<keyword id="KW-0543">Viral nucleoprotein</keyword>
<keyword id="KW-0946">Virion</keyword>
<protein>
    <recommendedName>
        <fullName>Nucleoprotein</fullName>
    </recommendedName>
    <alternativeName>
        <fullName>Nucleocapsid protein</fullName>
        <shortName>NP</shortName>
        <shortName>Protein N</shortName>
    </alternativeName>
</protein>
<evidence type="ECO:0000250" key="1">
    <source>
        <dbReference type="UniProtKB" id="O57286"/>
    </source>
</evidence>
<evidence type="ECO:0000250" key="2">
    <source>
        <dbReference type="UniProtKB" id="P04851"/>
    </source>
</evidence>
<evidence type="ECO:0000250" key="3">
    <source>
        <dbReference type="UniProtKB" id="P06159"/>
    </source>
</evidence>
<evidence type="ECO:0000250" key="4">
    <source>
        <dbReference type="UniProtKB" id="P0DXN6"/>
    </source>
</evidence>
<evidence type="ECO:0000250" key="5">
    <source>
        <dbReference type="UniProtKB" id="P10050"/>
    </source>
</evidence>
<evidence type="ECO:0000250" key="6">
    <source>
        <dbReference type="UniProtKB" id="Q07097"/>
    </source>
</evidence>
<evidence type="ECO:0000250" key="7">
    <source>
        <dbReference type="UniProtKB" id="Q77M43"/>
    </source>
</evidence>
<evidence type="ECO:0000250" key="8">
    <source>
        <dbReference type="UniProtKB" id="Q89933"/>
    </source>
</evidence>
<evidence type="ECO:0000250" key="9">
    <source>
        <dbReference type="UniProtKB" id="Q9WMB5"/>
    </source>
</evidence>
<evidence type="ECO:0000256" key="10">
    <source>
        <dbReference type="SAM" id="MobiDB-lite"/>
    </source>
</evidence>
<evidence type="ECO:0000305" key="11"/>
<dbReference type="EMBL" id="U03668">
    <property type="protein sequence ID" value="AAA56658.1"/>
    <property type="molecule type" value="Genomic_RNA"/>
</dbReference>
<dbReference type="EMBL" id="EU332918">
    <property type="protein sequence ID" value="ACC86073.1"/>
    <property type="molecule type" value="mRNA"/>
</dbReference>
<dbReference type="EMBL" id="FJ211583">
    <property type="protein sequence ID" value="ACN50008.1"/>
    <property type="molecule type" value="Viral_cRNA"/>
</dbReference>
<dbReference type="EMBL" id="FJ211589">
    <property type="protein sequence ID" value="ACN50047.1"/>
    <property type="molecule type" value="Viral_cRNA"/>
</dbReference>
<dbReference type="EMBL" id="FJ211590">
    <property type="protein sequence ID" value="ACN50055.1"/>
    <property type="molecule type" value="Viral_cRNA"/>
</dbReference>
<dbReference type="EMBL" id="AF266291">
    <property type="protein sequence ID" value="AAF85699.1"/>
    <property type="molecule type" value="Genomic_RNA"/>
</dbReference>
<dbReference type="BMRB" id="B8PZP3"/>
<dbReference type="SMR" id="B8PZP3"/>
<dbReference type="IntAct" id="B8PZP3">
    <property type="interactions" value="8"/>
</dbReference>
<dbReference type="Proteomes" id="UP000115521">
    <property type="component" value="Genome"/>
</dbReference>
<dbReference type="Proteomes" id="UP000135893">
    <property type="component" value="Genome"/>
</dbReference>
<dbReference type="Proteomes" id="UP000152604">
    <property type="component" value="Genome"/>
</dbReference>
<dbReference type="Proteomes" id="UP000180902">
    <property type="component" value="Genome"/>
</dbReference>
<dbReference type="GO" id="GO:0019029">
    <property type="term" value="C:helical viral capsid"/>
    <property type="evidence" value="ECO:0007669"/>
    <property type="project" value="UniProtKB-KW"/>
</dbReference>
<dbReference type="GO" id="GO:0030430">
    <property type="term" value="C:host cell cytoplasm"/>
    <property type="evidence" value="ECO:0007669"/>
    <property type="project" value="UniProtKB-SubCell"/>
</dbReference>
<dbReference type="GO" id="GO:0042025">
    <property type="term" value="C:host cell nucleus"/>
    <property type="evidence" value="ECO:0007669"/>
    <property type="project" value="UniProtKB-SubCell"/>
</dbReference>
<dbReference type="GO" id="GO:1990904">
    <property type="term" value="C:ribonucleoprotein complex"/>
    <property type="evidence" value="ECO:0007669"/>
    <property type="project" value="UniProtKB-KW"/>
</dbReference>
<dbReference type="GO" id="GO:0019013">
    <property type="term" value="C:viral nucleocapsid"/>
    <property type="evidence" value="ECO:0007669"/>
    <property type="project" value="UniProtKB-KW"/>
</dbReference>
<dbReference type="GO" id="GO:0003723">
    <property type="term" value="F:RNA binding"/>
    <property type="evidence" value="ECO:0007669"/>
    <property type="project" value="UniProtKB-KW"/>
</dbReference>
<dbReference type="GO" id="GO:0005198">
    <property type="term" value="F:structural molecule activity"/>
    <property type="evidence" value="ECO:0007669"/>
    <property type="project" value="InterPro"/>
</dbReference>
<dbReference type="InterPro" id="IPR002021">
    <property type="entry name" value="Paramyx_ncap"/>
</dbReference>
<dbReference type="Pfam" id="PF00973">
    <property type="entry name" value="Paramyxo_ncap"/>
    <property type="match status" value="1"/>
</dbReference>
<organismHost>
    <name type="scientific">Homo sapiens</name>
    <name type="common">Human</name>
    <dbReference type="NCBI Taxonomy" id="9606"/>
</organismHost>
<reference key="1">
    <citation type="journal article" date="1994" name="Virus Res.">
        <title>Comparison of sequences of the H, F, and N coding genes of measles virus vaccine strains.</title>
        <authorList>
            <person name="Rota J.S."/>
            <person name="Wang Z.D."/>
            <person name="Rota P.A."/>
            <person name="Bellini W.J."/>
        </authorList>
    </citation>
    <scope>NUCLEOTIDE SEQUENCE [GENOMIC RNA]</scope>
</reference>
<reference key="2">
    <citation type="submission" date="2007-12" db="EMBL/GenBank/DDBJ databases">
        <title>Heterogeneity of the interferon a/b response to measles infection governed by genome sequence, host cell type, dendritic cell maturation state and donors.</title>
        <authorList>
            <person name="Herschke F."/>
            <person name="Azocar O."/>
            <person name="Druelle J."/>
            <person name="Waku-Kouomou D."/>
            <person name="Duhen T."/>
            <person name="Plumet S."/>
            <person name="Delprat C."/>
            <person name="Wild F."/>
            <person name="Rabourdin-Combe C."/>
            <person name="Gerlier D."/>
            <person name="Valentin H."/>
        </authorList>
    </citation>
    <scope>NUCLEOTIDE SEQUENCE [GENOMIC RNA]</scope>
    <source>
        <strain>Rouvax-Schwarz</strain>
    </source>
</reference>
<reference key="3">
    <citation type="journal article" date="2009" name="Vaccine">
        <title>Comparative analysis of the complete nucleotide sequences of measles, mumps, and rubella strain genomes contained in Priorix-Tetra and ProQuad live attenuated combined vaccines.</title>
        <authorList>
            <person name="Tillieux S.L."/>
            <person name="Halsey W.S."/>
            <person name="Sathe G.M."/>
            <person name="Vassilev V."/>
        </authorList>
    </citation>
    <scope>NUCLEOTIDE SEQUENCE [GENOMIC RNA]</scope>
    <source>
        <strain>Attenuated Edmonston Enders (Morten)</strain>
        <strain>Edmonston-Schwarz vaccine</strain>
    </source>
</reference>
<reference key="4">
    <citation type="journal article" date="2001" name="J. Virol.">
        <title>Comparison of predicted amino acid sequences of measles virus strains in the Edmonston vaccine lineage.</title>
        <authorList>
            <person name="Parks C.L."/>
            <person name="Lerch R.A."/>
            <person name="Walpita P."/>
            <person name="Wang H.P."/>
            <person name="Sidhu M.S."/>
            <person name="Udem S.A."/>
        </authorList>
    </citation>
    <scope>NUCLEOTIDE SEQUENCE [GENOMIC RNA]</scope>
</reference>
<sequence>MATLLRSLALFKRNKDKPPITSGSGGAIRGIKHIIIVPIPGDSSITTRSRLLDRLVRLIGNPDVSGPKLTGALIGILSLFVESPGQLIQRITDDPDVSIRLLEVVQSDQSQSGLTFASRGTNMEDEADQYFSHDDPISSDQSRFGWFGNKEISDIEVQDPEGFNMILGTILAQIWVLLAKAVTAPDTAADSELRRWIKYTQQRRVVGEFRLERKWLDVVRNRIAEDLSLRRFMVALILDIKRTPGNKPRIAEMICDIDTYIVEAGLASFILTIKFGIETMYPALGLHEFAGELSTLESLMNLYQQMGETAPYMVILENSIQNKFSAGSYPLLWSYAMGVGVELENSMGGLNFGRSYFDPAYFRLGQEMVRRSAGKVSSTLASELGITAEDARLVSEIAMHTTEDKISRAVGPRQAQVSFLHGDQSENELPRLGGKEDRRVKQSRGEARESYRETGPSRASDARAAHLPTGTPLDIDTATESSQDPQDSRRSADALLRLQAMAGISEEQGSDTDTPIVYNDRNLLD</sequence>
<comment type="function">
    <text evidence="3 4 5 9">Forms the helical nucleocapsid (NC) in a ratio of 1 N per 6 ribonucleotides, protecting the genome from nucleases (By similarity). The nucleocapsid (NC) has a helical structure with either 12.35 or 11.64 N per turn, approximately 20 nm in diameter, with a hollow central cavity approximately 5 nm in diameter (By similarity). The encapsidated genomic RNA serves as template for transcription and replication; encapsidation by N is coupled to RNA synthesis (By similarity). Forms the encapsidation complex with the phosphoprotein protein P (By similarity). Before encapsidation, the newly synthesized free N protein, so-called N0, is chaperoned by P (By similarity). Participates, together with P, in the formation of viral factories (viroplasms), which are large inclusions in the host cytoplasm where replication takes place (By similarity). N is released in the blood following lysis of measles infected cells, it interacts then with human FCGR2B on immune cells, inducing apoptosis and blocking inflammatory immune response (By similarity).</text>
</comment>
<comment type="subunit">
    <text evidence="1 3 4 6 7 8 9">Homomultimer; forms the nucleocapsid (By similarity). Binds to viral genomic RNA (By similarity). N0 interacts (via Ncore) with the phosphoprotein (via N-terminus); this interaction allows P to chaperon N0 to avoid N polymerization and non-specific RNA binding before encapsidation (By similarity). Interacts (via the Ntail) as N-RNA template with the phosphoprotein (via C-terminus XD); this interaction maintains the P/L complex anchored to the nucleocapsid template during the sequential transcription (By similarity). Interacts with the phosphoprotein; this interaction leads to the formation of membraneless organelles that function as viral replication factories (By similarity). Interacts with human FCGR2B protein (By similarity). Interacts with human PPIA/CYPA and PPIB/CYPB (By similarity).</text>
</comment>
<comment type="subcellular location">
    <subcellularLocation>
        <location evidence="2">Virion</location>
    </subcellularLocation>
    <subcellularLocation>
        <location evidence="2">Host cytoplasm</location>
    </subcellularLocation>
    <subcellularLocation>
        <location evidence="2">Host nucleus</location>
    </subcellularLocation>
</comment>
<comment type="domain">
    <text evidence="8">Ncore is globular and carries regions required for N self-assembly and RNA-binding. Ntail is an intrinsically disordered monomeric domain in the C-terminus.</text>
</comment>
<comment type="PTM">
    <text evidence="9">Phosphorylation at Thr-279 is required for the formation of the nucleocapsid.</text>
</comment>
<comment type="similarity">
    <text evidence="11">Belongs to the paramyxoviruses nucleocapsid family.</text>
</comment>
<gene>
    <name type="primary">N</name>
    <name type="synonym">NP</name>
</gene>
<proteinExistence type="evidence at transcript level"/>
<feature type="chain" id="PRO_0000387981" description="Nucleoprotein">
    <location>
        <begin position="1"/>
        <end position="525"/>
    </location>
</feature>
<feature type="region of interest" description="Ncore" evidence="3">
    <location>
        <begin position="1"/>
        <end position="403"/>
    </location>
</feature>
<feature type="region of interest" description="RNA packaging and organization of the helical nucleocapsid" evidence="8">
    <location>
        <begin position="1"/>
        <end position="375"/>
    </location>
</feature>
<feature type="region of interest" description="Homomultimerization" evidence="5">
    <location>
        <begin position="1"/>
        <end position="36"/>
    </location>
</feature>
<feature type="region of interest" description="Homomultimerization" evidence="5">
    <location>
        <begin position="373"/>
        <end position="391"/>
    </location>
</feature>
<feature type="region of interest" description="Ntail" evidence="3">
    <location>
        <begin position="404"/>
        <end position="525"/>
    </location>
</feature>
<feature type="region of interest" description="Disordered" evidence="10">
    <location>
        <begin position="418"/>
        <end position="525"/>
    </location>
</feature>
<feature type="region of interest" description="Interaction with the phosphoprotein" evidence="7">
    <location>
        <begin position="477"/>
        <end position="505"/>
    </location>
</feature>
<feature type="short sequence motif" description="Nuclear localization signal" evidence="2">
    <location>
        <begin position="70"/>
        <end position="77"/>
    </location>
</feature>
<feature type="short sequence motif" description="Nuclear export signal" evidence="2">
    <location>
        <begin position="425"/>
        <end position="440"/>
    </location>
</feature>
<feature type="compositionally biased region" description="Basic and acidic residues" evidence="10">
    <location>
        <begin position="433"/>
        <end position="452"/>
    </location>
</feature>
<feature type="binding site" evidence="7">
    <location>
        <position position="180"/>
    </location>
    <ligand>
        <name>RNA</name>
        <dbReference type="ChEBI" id="CHEBI:33697"/>
    </ligand>
</feature>
<feature type="binding site" evidence="7">
    <location>
        <position position="195"/>
    </location>
    <ligand>
        <name>RNA</name>
        <dbReference type="ChEBI" id="CHEBI:33697"/>
    </ligand>
</feature>
<feature type="binding site" evidence="7">
    <location>
        <position position="202"/>
    </location>
    <ligand>
        <name>RNA</name>
        <dbReference type="ChEBI" id="CHEBI:33697"/>
    </ligand>
</feature>
<feature type="binding site" evidence="7">
    <location>
        <position position="260"/>
    </location>
    <ligand>
        <name>RNA</name>
        <dbReference type="ChEBI" id="CHEBI:33697"/>
    </ligand>
</feature>
<feature type="binding site" evidence="7">
    <location>
        <position position="351"/>
    </location>
    <ligand>
        <name>RNA</name>
        <dbReference type="ChEBI" id="CHEBI:33697"/>
    </ligand>
</feature>
<feature type="modified residue" description="Phosphothreonine; by host" evidence="9">
    <location>
        <position position="279"/>
    </location>
</feature>